<keyword id="KW-0256">Endoplasmic reticulum</keyword>
<keyword id="KW-0325">Glycoprotein</keyword>
<keyword id="KW-0378">Hydrolase</keyword>
<keyword id="KW-0464">Manganese</keyword>
<keyword id="KW-0479">Metal-binding</keyword>
<keyword id="KW-0659">Purine metabolism</keyword>
<keyword id="KW-1185">Reference proteome</keyword>
<keyword id="KW-0732">Signal</keyword>
<proteinExistence type="evidence at protein level"/>
<organism>
    <name type="scientific">Arabidopsis thaliana</name>
    <name type="common">Mouse-ear cress</name>
    <dbReference type="NCBI Taxonomy" id="3702"/>
    <lineage>
        <taxon>Eukaryota</taxon>
        <taxon>Viridiplantae</taxon>
        <taxon>Streptophyta</taxon>
        <taxon>Embryophyta</taxon>
        <taxon>Tracheophyta</taxon>
        <taxon>Spermatophyta</taxon>
        <taxon>Magnoliopsida</taxon>
        <taxon>eudicotyledons</taxon>
        <taxon>Gunneridae</taxon>
        <taxon>Pentapetalae</taxon>
        <taxon>rosids</taxon>
        <taxon>malvids</taxon>
        <taxon>Brassicales</taxon>
        <taxon>Brassicaceae</taxon>
        <taxon>Camelineae</taxon>
        <taxon>Arabidopsis</taxon>
    </lineage>
</organism>
<name>AAH_ARATH</name>
<gene>
    <name evidence="10" type="primary">AAH</name>
    <name evidence="12" type="ordered locus">At4g20070</name>
    <name evidence="13" type="ORF">F18F4.170</name>
</gene>
<evidence type="ECO:0000250" key="1">
    <source>
        <dbReference type="UniProtKB" id="Q8VXY9"/>
    </source>
</evidence>
<evidence type="ECO:0000255" key="2"/>
<evidence type="ECO:0000255" key="3">
    <source>
        <dbReference type="PROSITE-ProRule" id="PRU00498"/>
    </source>
</evidence>
<evidence type="ECO:0000256" key="4">
    <source>
        <dbReference type="SAM" id="MobiDB-lite"/>
    </source>
</evidence>
<evidence type="ECO:0000269" key="5">
    <source>
    </source>
</evidence>
<evidence type="ECO:0000269" key="6">
    <source>
    </source>
</evidence>
<evidence type="ECO:0000269" key="7">
    <source>
    </source>
</evidence>
<evidence type="ECO:0000269" key="8">
    <source>
    </source>
</evidence>
<evidence type="ECO:0000269" key="9">
    <source>
    </source>
</evidence>
<evidence type="ECO:0000303" key="10">
    <source>
    </source>
</evidence>
<evidence type="ECO:0000305" key="11"/>
<evidence type="ECO:0000312" key="12">
    <source>
        <dbReference type="Araport" id="AT4G20070"/>
    </source>
</evidence>
<evidence type="ECO:0000312" key="13">
    <source>
        <dbReference type="EMBL" id="CAA16615.2"/>
    </source>
</evidence>
<protein>
    <recommendedName>
        <fullName evidence="11">Allantoate deiminase</fullName>
        <ecNumber evidence="5">3.5.3.9</ecNumber>
    </recommendedName>
    <alternativeName>
        <fullName evidence="10">Allantoate amidohydrolase</fullName>
        <shortName evidence="10">AtAAH</shortName>
    </alternativeName>
</protein>
<accession>O49434</accession>
<sequence>MAVPHPSSSSSRSHPFLSHVYHTSFHHHHHHNHPSLVLFWCLVFSLLSPLALSSSSSSSSSSSDSSSSSSSHISLGIGETEGTKHDLHQAILRDEAVARLHELGQVSDAATHLERTFMSPASIRAIPLIRGWMEDAGLSTWVDYMGNVHGRVEPKNGSSQALLIGSHMDTVIDAGKYDGSLGIISAISALKVLKIDGRLGELKRPVEVIAFSDEEGVRFQSTFLGSAALAGIMPVSRLEVTDKSGISVQDALKENSIDITDENLMQLKYDPASVWGYVEVHIEQGPVLEWVGYPLGVVKGIAGQTRLKVTVKGSQGHAGTVPMSMRQDPMTGAAELIVLLESVCKNPKDYLSCNVQCNEDTVESLANSLVCTVGEISTWPSASNVIPGQVTFTVDLRTIDDVGRKAILHDLSTRMYQICDKRSLLCSIERKHDADAVMSDPQLSLQLKSAAQSALKKMTGEVQDEVPVLMSGAGHDAMAMAHLTKVGMLFVRCRGGISHSPAEHVLDDDVGAAGLAILEFLESQM</sequence>
<dbReference type="EC" id="3.5.3.9" evidence="5"/>
<dbReference type="EMBL" id="AL021637">
    <property type="protein sequence ID" value="CAA16615.2"/>
    <property type="molecule type" value="Genomic_DNA"/>
</dbReference>
<dbReference type="EMBL" id="AL161552">
    <property type="protein sequence ID" value="CAB79007.1"/>
    <property type="molecule type" value="Genomic_DNA"/>
</dbReference>
<dbReference type="EMBL" id="CP002687">
    <property type="protein sequence ID" value="AEE84269.1"/>
    <property type="molecule type" value="Genomic_DNA"/>
</dbReference>
<dbReference type="EMBL" id="BT025334">
    <property type="protein sequence ID" value="ABF57290.1"/>
    <property type="molecule type" value="mRNA"/>
</dbReference>
<dbReference type="PIR" id="F85227">
    <property type="entry name" value="F85227"/>
</dbReference>
<dbReference type="RefSeq" id="NP_193740.1">
    <property type="nucleotide sequence ID" value="NM_118126.4"/>
</dbReference>
<dbReference type="SMR" id="O49434"/>
<dbReference type="FunCoup" id="O49434">
    <property type="interactions" value="10"/>
</dbReference>
<dbReference type="STRING" id="3702.O49434"/>
<dbReference type="MEROPS" id="M20.A07"/>
<dbReference type="GlyGen" id="O49434">
    <property type="glycosylation" value="1 site"/>
</dbReference>
<dbReference type="PaxDb" id="3702-AT4G20070.1"/>
<dbReference type="ProteomicsDB" id="245079"/>
<dbReference type="EnsemblPlants" id="AT4G20070.1">
    <property type="protein sequence ID" value="AT4G20070.1"/>
    <property type="gene ID" value="AT4G20070"/>
</dbReference>
<dbReference type="GeneID" id="827752"/>
<dbReference type="Gramene" id="AT4G20070.1">
    <property type="protein sequence ID" value="AT4G20070.1"/>
    <property type="gene ID" value="AT4G20070"/>
</dbReference>
<dbReference type="KEGG" id="ath:AT4G20070"/>
<dbReference type="Araport" id="AT4G20070"/>
<dbReference type="TAIR" id="AT4G20070">
    <property type="gene designation" value="AAH"/>
</dbReference>
<dbReference type="eggNOG" id="ENOG502QSJ5">
    <property type="taxonomic scope" value="Eukaryota"/>
</dbReference>
<dbReference type="HOGENOM" id="CLU_024588_6_1_1"/>
<dbReference type="InParanoid" id="O49434"/>
<dbReference type="OMA" id="CSSGVWA"/>
<dbReference type="OrthoDB" id="4676at2759"/>
<dbReference type="PhylomeDB" id="O49434"/>
<dbReference type="BioCyc" id="ARA:AT4G20070-MONOMER"/>
<dbReference type="BioCyc" id="MetaCyc:AT4G20070-MONOMER"/>
<dbReference type="BRENDA" id="3.5.3.9">
    <property type="organism ID" value="399"/>
</dbReference>
<dbReference type="PRO" id="PR:O49434"/>
<dbReference type="Proteomes" id="UP000006548">
    <property type="component" value="Chromosome 4"/>
</dbReference>
<dbReference type="ExpressionAtlas" id="O49434">
    <property type="expression patterns" value="baseline and differential"/>
</dbReference>
<dbReference type="GO" id="GO:0005783">
    <property type="term" value="C:endoplasmic reticulum"/>
    <property type="evidence" value="ECO:0000314"/>
    <property type="project" value="TAIR"/>
</dbReference>
<dbReference type="GO" id="GO:0047652">
    <property type="term" value="F:allantoate deiminase activity"/>
    <property type="evidence" value="ECO:0000314"/>
    <property type="project" value="TAIR"/>
</dbReference>
<dbReference type="GO" id="GO:0046872">
    <property type="term" value="F:metal ion binding"/>
    <property type="evidence" value="ECO:0007669"/>
    <property type="project" value="UniProtKB-KW"/>
</dbReference>
<dbReference type="GO" id="GO:0006145">
    <property type="term" value="P:purine nucleobase catabolic process"/>
    <property type="evidence" value="ECO:0000314"/>
    <property type="project" value="TAIR"/>
</dbReference>
<dbReference type="GO" id="GO:0010136">
    <property type="term" value="P:ureide catabolic process"/>
    <property type="evidence" value="ECO:0000314"/>
    <property type="project" value="TAIR"/>
</dbReference>
<dbReference type="CDD" id="cd03884">
    <property type="entry name" value="M20_bAS"/>
    <property type="match status" value="1"/>
</dbReference>
<dbReference type="FunFam" id="3.40.630.10:FF:000044">
    <property type="entry name" value="Allantoate amidohydrolase"/>
    <property type="match status" value="1"/>
</dbReference>
<dbReference type="FunFam" id="3.30.70.360:FF:000019">
    <property type="entry name" value="Allantoate deiminase"/>
    <property type="match status" value="1"/>
</dbReference>
<dbReference type="Gene3D" id="3.30.70.360">
    <property type="match status" value="1"/>
</dbReference>
<dbReference type="Gene3D" id="3.40.630.10">
    <property type="entry name" value="Zn peptidases"/>
    <property type="match status" value="1"/>
</dbReference>
<dbReference type="InterPro" id="IPR010158">
    <property type="entry name" value="Amidase_Cbmase"/>
</dbReference>
<dbReference type="InterPro" id="IPR001261">
    <property type="entry name" value="ArgE/DapE_CS"/>
</dbReference>
<dbReference type="InterPro" id="IPR036264">
    <property type="entry name" value="Bact_exopeptidase_dim_dom"/>
</dbReference>
<dbReference type="InterPro" id="IPR002933">
    <property type="entry name" value="Peptidase_M20"/>
</dbReference>
<dbReference type="InterPro" id="IPR011650">
    <property type="entry name" value="Peptidase_M20_dimer"/>
</dbReference>
<dbReference type="NCBIfam" id="TIGR01879">
    <property type="entry name" value="hydantase"/>
    <property type="match status" value="1"/>
</dbReference>
<dbReference type="PANTHER" id="PTHR32494">
    <property type="entry name" value="ALLANTOATE DEIMINASE-RELATED"/>
    <property type="match status" value="1"/>
</dbReference>
<dbReference type="PANTHER" id="PTHR32494:SF19">
    <property type="entry name" value="ALLANTOATE DEIMINASE-RELATED"/>
    <property type="match status" value="1"/>
</dbReference>
<dbReference type="Pfam" id="PF07687">
    <property type="entry name" value="M20_dimer"/>
    <property type="match status" value="1"/>
</dbReference>
<dbReference type="Pfam" id="PF01546">
    <property type="entry name" value="Peptidase_M20"/>
    <property type="match status" value="1"/>
</dbReference>
<dbReference type="SUPFAM" id="SSF55031">
    <property type="entry name" value="Bacterial exopeptidase dimerisation domain"/>
    <property type="match status" value="1"/>
</dbReference>
<dbReference type="SUPFAM" id="SSF53187">
    <property type="entry name" value="Zn-dependent exopeptidases"/>
    <property type="match status" value="1"/>
</dbReference>
<dbReference type="PROSITE" id="PS00758">
    <property type="entry name" value="ARGE_DAPE_CPG2_1"/>
    <property type="match status" value="1"/>
</dbReference>
<feature type="signal peptide" evidence="2">
    <location>
        <begin position="1"/>
        <end position="53"/>
    </location>
</feature>
<feature type="chain" id="PRO_0000315838" description="Allantoate deiminase">
    <location>
        <begin position="54"/>
        <end position="525"/>
    </location>
</feature>
<feature type="region of interest" description="Disordered" evidence="4">
    <location>
        <begin position="56"/>
        <end position="78"/>
    </location>
</feature>
<feature type="compositionally biased region" description="Low complexity" evidence="4">
    <location>
        <begin position="56"/>
        <end position="75"/>
    </location>
</feature>
<feature type="binding site" evidence="1">
    <location>
        <position position="167"/>
    </location>
    <ligand>
        <name>Mn(2+)</name>
        <dbReference type="ChEBI" id="CHEBI:29035"/>
        <label>1</label>
    </ligand>
</feature>
<feature type="binding site" evidence="1">
    <location>
        <position position="178"/>
    </location>
    <ligand>
        <name>Mn(2+)</name>
        <dbReference type="ChEBI" id="CHEBI:29035"/>
        <label>1</label>
    </ligand>
</feature>
<feature type="binding site" evidence="1">
    <location>
        <position position="178"/>
    </location>
    <ligand>
        <name>Mn(2+)</name>
        <dbReference type="ChEBI" id="CHEBI:29035"/>
        <label>2</label>
    </ligand>
</feature>
<feature type="binding site" evidence="1">
    <location>
        <position position="215"/>
    </location>
    <ligand>
        <name>Mn(2+)</name>
        <dbReference type="ChEBI" id="CHEBI:29035"/>
        <label>2</label>
    </ligand>
</feature>
<feature type="binding site" evidence="1">
    <location>
        <position position="281"/>
    </location>
    <ligand>
        <name>Mn(2+)</name>
        <dbReference type="ChEBI" id="CHEBI:29035"/>
        <label>1</label>
    </ligand>
</feature>
<feature type="binding site" evidence="1">
    <location>
        <position position="499"/>
    </location>
    <ligand>
        <name>Mn(2+)</name>
        <dbReference type="ChEBI" id="CHEBI:29035"/>
        <label>2</label>
    </ligand>
</feature>
<feature type="glycosylation site" description="N-linked (GlcNAc...) asparagine" evidence="3">
    <location>
        <position position="156"/>
    </location>
</feature>
<comment type="function">
    <text evidence="5 6 7 8 9">Involved in the catabolism of purine nucleotides. Can use allantoate as substrate, but not Nalpha-carbamoyl-L-Asp, Nalpha-carbamoyl-L-Ala or Nalpha-carbamoyl-Gly. The sequential activity of AAH, UGLYAH and UAH allows a complete purine breakdown without the intermediate generation of urea (PubMed:16496096, PubMed:18065556, PubMed:19935661, PubMed:23940254). Involved in the regulation of seed maturation and seed dormancy (PubMed:35861030).</text>
</comment>
<comment type="catalytic activity">
    <reaction evidence="5 6">
        <text>allantoate + H2O + 2 H(+) = (S)-2-ureidoglycine + NH4(+) + CO2</text>
        <dbReference type="Rhea" id="RHEA:27485"/>
        <dbReference type="ChEBI" id="CHEBI:15377"/>
        <dbReference type="ChEBI" id="CHEBI:15378"/>
        <dbReference type="ChEBI" id="CHEBI:16526"/>
        <dbReference type="ChEBI" id="CHEBI:17536"/>
        <dbReference type="ChEBI" id="CHEBI:28938"/>
        <dbReference type="ChEBI" id="CHEBI:59947"/>
        <dbReference type="EC" id="3.5.3.9"/>
    </reaction>
</comment>
<comment type="cofactor">
    <cofactor evidence="6">
        <name>Mn(2+)</name>
        <dbReference type="ChEBI" id="CHEBI:29035"/>
    </cofactor>
    <text evidence="1">Binds 2 manganese ions per subunit.</text>
</comment>
<comment type="activity regulation">
    <text evidence="6">Inhibited by borate, fluoride, L-Asn and L-Asp, but not by phenylphosphorodiamidate.</text>
</comment>
<comment type="biophysicochemical properties">
    <kinetics>
        <text evidence="6">kcat is 27.2 sec(-1) for allantoate.</text>
    </kinetics>
</comment>
<comment type="subunit">
    <text evidence="6">Homodimer.</text>
</comment>
<comment type="subcellular location">
    <subcellularLocation>
        <location evidence="6">Endoplasmic reticulum</location>
    </subcellularLocation>
</comment>
<comment type="tissue specificity">
    <text evidence="5">Expressed in seedlings, roots, stems, leaves, flowers, siliques and seeds.</text>
</comment>
<comment type="induction">
    <text evidence="9">Up-regulated in imbibed dormant seeds.</text>
</comment>
<comment type="disruption phenotype">
    <text evidence="5 6 8 9">No visible phenotype under normal growth conditions, but mutant plants are unable to grow on a medium containing allantoin as the sole nitrogen source and accumulate allantoate (PubMed:16496096, PubMed:18065556, PubMed:23940254). Partial defect in seed maturation and increased seed dormancy (PubMed:35861030).</text>
</comment>
<comment type="similarity">
    <text evidence="11">Belongs to the peptidase M20A family.</text>
</comment>
<reference key="1">
    <citation type="journal article" date="1999" name="Nature">
        <title>Sequence and analysis of chromosome 4 of the plant Arabidopsis thaliana.</title>
        <authorList>
            <person name="Mayer K.F.X."/>
            <person name="Schueller C."/>
            <person name="Wambutt R."/>
            <person name="Murphy G."/>
            <person name="Volckaert G."/>
            <person name="Pohl T."/>
            <person name="Duesterhoeft A."/>
            <person name="Stiekema W."/>
            <person name="Entian K.-D."/>
            <person name="Terryn N."/>
            <person name="Harris B."/>
            <person name="Ansorge W."/>
            <person name="Brandt P."/>
            <person name="Grivell L.A."/>
            <person name="Rieger M."/>
            <person name="Weichselgartner M."/>
            <person name="de Simone V."/>
            <person name="Obermaier B."/>
            <person name="Mache R."/>
            <person name="Mueller M."/>
            <person name="Kreis M."/>
            <person name="Delseny M."/>
            <person name="Puigdomenech P."/>
            <person name="Watson M."/>
            <person name="Schmidtheini T."/>
            <person name="Reichert B."/>
            <person name="Portetelle D."/>
            <person name="Perez-Alonso M."/>
            <person name="Boutry M."/>
            <person name="Bancroft I."/>
            <person name="Vos P."/>
            <person name="Hoheisel J."/>
            <person name="Zimmermann W."/>
            <person name="Wedler H."/>
            <person name="Ridley P."/>
            <person name="Langham S.-A."/>
            <person name="McCullagh B."/>
            <person name="Bilham L."/>
            <person name="Robben J."/>
            <person name="van der Schueren J."/>
            <person name="Grymonprez B."/>
            <person name="Chuang Y.-J."/>
            <person name="Vandenbussche F."/>
            <person name="Braeken M."/>
            <person name="Weltjens I."/>
            <person name="Voet M."/>
            <person name="Bastiaens I."/>
            <person name="Aert R."/>
            <person name="Defoor E."/>
            <person name="Weitzenegger T."/>
            <person name="Bothe G."/>
            <person name="Ramsperger U."/>
            <person name="Hilbert H."/>
            <person name="Braun M."/>
            <person name="Holzer E."/>
            <person name="Brandt A."/>
            <person name="Peters S."/>
            <person name="van Staveren M."/>
            <person name="Dirkse W."/>
            <person name="Mooijman P."/>
            <person name="Klein Lankhorst R."/>
            <person name="Rose M."/>
            <person name="Hauf J."/>
            <person name="Koetter P."/>
            <person name="Berneiser S."/>
            <person name="Hempel S."/>
            <person name="Feldpausch M."/>
            <person name="Lamberth S."/>
            <person name="Van den Daele H."/>
            <person name="De Keyser A."/>
            <person name="Buysshaert C."/>
            <person name="Gielen J."/>
            <person name="Villarroel R."/>
            <person name="De Clercq R."/>
            <person name="van Montagu M."/>
            <person name="Rogers J."/>
            <person name="Cronin A."/>
            <person name="Quail M.A."/>
            <person name="Bray-Allen S."/>
            <person name="Clark L."/>
            <person name="Doggett J."/>
            <person name="Hall S."/>
            <person name="Kay M."/>
            <person name="Lennard N."/>
            <person name="McLay K."/>
            <person name="Mayes R."/>
            <person name="Pettett A."/>
            <person name="Rajandream M.A."/>
            <person name="Lyne M."/>
            <person name="Benes V."/>
            <person name="Rechmann S."/>
            <person name="Borkova D."/>
            <person name="Bloecker H."/>
            <person name="Scharfe M."/>
            <person name="Grimm M."/>
            <person name="Loehnert T.-H."/>
            <person name="Dose S."/>
            <person name="de Haan M."/>
            <person name="Maarse A.C."/>
            <person name="Schaefer M."/>
            <person name="Mueller-Auer S."/>
            <person name="Gabel C."/>
            <person name="Fuchs M."/>
            <person name="Fartmann B."/>
            <person name="Granderath K."/>
            <person name="Dauner D."/>
            <person name="Herzl A."/>
            <person name="Neumann S."/>
            <person name="Argiriou A."/>
            <person name="Vitale D."/>
            <person name="Liguori R."/>
            <person name="Piravandi E."/>
            <person name="Massenet O."/>
            <person name="Quigley F."/>
            <person name="Clabauld G."/>
            <person name="Muendlein A."/>
            <person name="Felber R."/>
            <person name="Schnabl S."/>
            <person name="Hiller R."/>
            <person name="Schmidt W."/>
            <person name="Lecharny A."/>
            <person name="Aubourg S."/>
            <person name="Chefdor F."/>
            <person name="Cooke R."/>
            <person name="Berger C."/>
            <person name="Monfort A."/>
            <person name="Casacuberta E."/>
            <person name="Gibbons T."/>
            <person name="Weber N."/>
            <person name="Vandenbol M."/>
            <person name="Bargues M."/>
            <person name="Terol J."/>
            <person name="Torres A."/>
            <person name="Perez-Perez A."/>
            <person name="Purnelle B."/>
            <person name="Bent E."/>
            <person name="Johnson S."/>
            <person name="Tacon D."/>
            <person name="Jesse T."/>
            <person name="Heijnen L."/>
            <person name="Schwarz S."/>
            <person name="Scholler P."/>
            <person name="Heber S."/>
            <person name="Francs P."/>
            <person name="Bielke C."/>
            <person name="Frishman D."/>
            <person name="Haase D."/>
            <person name="Lemcke K."/>
            <person name="Mewes H.-W."/>
            <person name="Stocker S."/>
            <person name="Zaccaria P."/>
            <person name="Bevan M."/>
            <person name="Wilson R.K."/>
            <person name="de la Bastide M."/>
            <person name="Habermann K."/>
            <person name="Parnell L."/>
            <person name="Dedhia N."/>
            <person name="Gnoj L."/>
            <person name="Schutz K."/>
            <person name="Huang E."/>
            <person name="Spiegel L."/>
            <person name="Sekhon M."/>
            <person name="Murray J."/>
            <person name="Sheet P."/>
            <person name="Cordes M."/>
            <person name="Abu-Threideh J."/>
            <person name="Stoneking T."/>
            <person name="Kalicki J."/>
            <person name="Graves T."/>
            <person name="Harmon G."/>
            <person name="Edwards J."/>
            <person name="Latreille P."/>
            <person name="Courtney L."/>
            <person name="Cloud J."/>
            <person name="Abbott A."/>
            <person name="Scott K."/>
            <person name="Johnson D."/>
            <person name="Minx P."/>
            <person name="Bentley D."/>
            <person name="Fulton B."/>
            <person name="Miller N."/>
            <person name="Greco T."/>
            <person name="Kemp K."/>
            <person name="Kramer J."/>
            <person name="Fulton L."/>
            <person name="Mardis E."/>
            <person name="Dante M."/>
            <person name="Pepin K."/>
            <person name="Hillier L.W."/>
            <person name="Nelson J."/>
            <person name="Spieth J."/>
            <person name="Ryan E."/>
            <person name="Andrews S."/>
            <person name="Geisel C."/>
            <person name="Layman D."/>
            <person name="Du H."/>
            <person name="Ali J."/>
            <person name="Berghoff A."/>
            <person name="Jones K."/>
            <person name="Drone K."/>
            <person name="Cotton M."/>
            <person name="Joshu C."/>
            <person name="Antonoiu B."/>
            <person name="Zidanic M."/>
            <person name="Strong C."/>
            <person name="Sun H."/>
            <person name="Lamar B."/>
            <person name="Yordan C."/>
            <person name="Ma P."/>
            <person name="Zhong J."/>
            <person name="Preston R."/>
            <person name="Vil D."/>
            <person name="Shekher M."/>
            <person name="Matero A."/>
            <person name="Shah R."/>
            <person name="Swaby I.K."/>
            <person name="O'Shaughnessy A."/>
            <person name="Rodriguez M."/>
            <person name="Hoffman J."/>
            <person name="Till S."/>
            <person name="Granat S."/>
            <person name="Shohdy N."/>
            <person name="Hasegawa A."/>
            <person name="Hameed A."/>
            <person name="Lodhi M."/>
            <person name="Johnson A."/>
            <person name="Chen E."/>
            <person name="Marra M.A."/>
            <person name="Martienssen R."/>
            <person name="McCombie W.R."/>
        </authorList>
    </citation>
    <scope>NUCLEOTIDE SEQUENCE [LARGE SCALE GENOMIC DNA]</scope>
    <source>
        <strain>cv. Columbia</strain>
    </source>
</reference>
<reference key="2">
    <citation type="journal article" date="2017" name="Plant J.">
        <title>Araport11: a complete reannotation of the Arabidopsis thaliana reference genome.</title>
        <authorList>
            <person name="Cheng C.Y."/>
            <person name="Krishnakumar V."/>
            <person name="Chan A.P."/>
            <person name="Thibaud-Nissen F."/>
            <person name="Schobel S."/>
            <person name="Town C.D."/>
        </authorList>
    </citation>
    <scope>GENOME REANNOTATION</scope>
    <source>
        <strain>cv. Columbia</strain>
    </source>
</reference>
<reference key="3">
    <citation type="submission" date="2006-05" db="EMBL/GenBank/DDBJ databases">
        <title>Arabidopsis ORF clones.</title>
        <authorList>
            <person name="Shinn P."/>
            <person name="Chen H."/>
            <person name="Kim C.J."/>
            <person name="Quinitio C."/>
            <person name="Ecker J.R."/>
        </authorList>
    </citation>
    <scope>NUCLEOTIDE SEQUENCE [LARGE SCALE MRNA]</scope>
    <source>
        <strain>cv. Columbia</strain>
    </source>
</reference>
<reference key="4">
    <citation type="journal article" date="2006" name="Planta">
        <title>AtAAH encodes a protein with allantoate amidohydrolase activity from Arabidopsis thaliana.</title>
        <authorList>
            <person name="Todd C.D."/>
            <person name="Polacco J.C."/>
        </authorList>
    </citation>
    <scope>FUNCTION</scope>
    <scope>CATALYTIC ACTIVITY</scope>
    <scope>TISSUE SPECIFICITY</scope>
    <scope>DISRUPTION PHENOTYPE</scope>
</reference>
<reference key="5">
    <citation type="journal article" date="2008" name="Plant Physiol.">
        <title>Identification, biochemical characterization, and subcellular localization of allantoate amidohydrolases from Arabidopsis and soybean.</title>
        <authorList>
            <person name="Werner A.K."/>
            <person name="Sparkes I.A."/>
            <person name="Romeis T."/>
            <person name="Witte C.P."/>
        </authorList>
    </citation>
    <scope>FUNCTION</scope>
    <scope>CATALYTIC ACTIVITY</scope>
    <scope>BIOPHYSICOCHEMICAL PROPERTIES</scope>
    <scope>COFACTOR</scope>
    <scope>ACTIVITY REGULATION</scope>
    <scope>SUBUNIT</scope>
    <scope>DISRUPTION PHENOTYPE</scope>
    <scope>SUBCELLULAR LOCATION</scope>
</reference>
<reference key="6">
    <citation type="journal article" date="2010" name="Nat. Chem. Biol.">
        <title>Ureide catabolism in Arabidopsis thaliana and Escherichia coli.</title>
        <authorList>
            <person name="Werner A.K."/>
            <person name="Romeis T."/>
            <person name="Witte C.P."/>
        </authorList>
    </citation>
    <scope>FUNCTION</scope>
</reference>
<reference key="7">
    <citation type="journal article" date="2013" name="Plant Physiol.">
        <title>The ureide-degrading reactions of purine ring catabolism employ three amidohydrolases and one aminohydrolase in Arabidopsis, soybean, and rice.</title>
        <authorList>
            <person name="Werner A.K."/>
            <person name="Medina-Escobar N."/>
            <person name="Zulawski M."/>
            <person name="Sparkes I.A."/>
            <person name="Cao F.Q."/>
            <person name="Witte C.P."/>
        </authorList>
    </citation>
    <scope>FUNCTION</scope>
    <scope>DISRUPTION PHENOTYPE</scope>
</reference>
<reference key="8">
    <citation type="journal article" date="2022" name="Plant Cell Physiol.">
        <title>A role for allantoate amidohydrolase (AtAAH) in the germination of Arabidopsis thaliana seeds.</title>
        <authorList>
            <person name="Yazdanpanah F."/>
            <person name="Willems L.A.J."/>
            <person name="He H."/>
            <person name="Hilhorst H.W.M."/>
            <person name="Bentsink L."/>
        </authorList>
    </citation>
    <scope>FUNCTION</scope>
    <scope>INDUCTION</scope>
    <scope>DISRUPTION PHENOTYPE</scope>
</reference>